<evidence type="ECO:0000250" key="1"/>
<evidence type="ECO:0000255" key="2"/>
<evidence type="ECO:0000255" key="3">
    <source>
        <dbReference type="PROSITE-ProRule" id="PRU00716"/>
    </source>
</evidence>
<evidence type="ECO:0000305" key="4"/>
<feature type="chain" id="PRO_0000330193" description="NADH-cytochrome b5 reductase 2-B">
    <location>
        <begin position="1"/>
        <end position="306"/>
    </location>
</feature>
<feature type="transmembrane region" description="Helical" evidence="2">
    <location>
        <begin position="12"/>
        <end position="32"/>
    </location>
</feature>
<feature type="domain" description="FAD-binding FR-type" evidence="3">
    <location>
        <begin position="53"/>
        <end position="157"/>
    </location>
</feature>
<feature type="binding site" evidence="1">
    <location>
        <begin position="160"/>
        <end position="195"/>
    </location>
    <ligand>
        <name>FAD</name>
        <dbReference type="ChEBI" id="CHEBI:57692"/>
    </ligand>
</feature>
<accession>A7TM72</accession>
<gene>
    <name type="primary">MCR1B</name>
    <name type="ORF">Kpol_529p19</name>
</gene>
<reference key="1">
    <citation type="journal article" date="2007" name="Proc. Natl. Acad. Sci. U.S.A.">
        <title>Independent sorting-out of thousands of duplicated gene pairs in two yeast species descended from a whole-genome duplication.</title>
        <authorList>
            <person name="Scannell D.R."/>
            <person name="Frank A.C."/>
            <person name="Conant G.C."/>
            <person name="Byrne K.P."/>
            <person name="Woolfit M."/>
            <person name="Wolfe K.H."/>
        </authorList>
    </citation>
    <scope>NUCLEOTIDE SEQUENCE [LARGE SCALE GENOMIC DNA]</scope>
    <source>
        <strain>ATCC 22028 / DSM 70294 / BCRC 21397 / CBS 2163 / NBRC 10782 / NRRL Y-8283 / UCD 57-17</strain>
    </source>
</reference>
<protein>
    <recommendedName>
        <fullName>NADH-cytochrome b5 reductase 2-B</fullName>
        <ecNumber>1.6.2.2</ecNumber>
    </recommendedName>
    <alternativeName>
        <fullName>Mitochondrial cytochrome b reductase B</fullName>
    </alternativeName>
</protein>
<proteinExistence type="inferred from homology"/>
<sequence>MISSFTSLGSRPLLLSSGIAVTAAAAVYFSTGSRLANEALHNKTFKGFKGPASTWVDLPLVKFEDLSHDTRKFTFKLPNDDDVSGISPLSFLLARPHGTWSLRGIRPYTPVSLPETQGVIEFVIKHVPNGGMSSHMFSLKPNDTVSFTGPIVKYEWKQNKFDSVTLLGAGSGITPLYQLMGSILSNPEDKTKINLFYANKTSDDILLKKELDEFQQKFSDRVKIHYYLSQPKTKDIASTGAKKGFIAKEDIESLAPASNENTHVFVCGPEPFVKAYAGQQGPLFFQGSFGGILKELGYTKSQVFKV</sequence>
<keyword id="KW-0274">FAD</keyword>
<keyword id="KW-0285">Flavoprotein</keyword>
<keyword id="KW-0472">Membrane</keyword>
<keyword id="KW-0496">Mitochondrion</keyword>
<keyword id="KW-1000">Mitochondrion outer membrane</keyword>
<keyword id="KW-0520">NAD</keyword>
<keyword id="KW-0560">Oxidoreductase</keyword>
<keyword id="KW-1185">Reference proteome</keyword>
<keyword id="KW-0812">Transmembrane</keyword>
<keyword id="KW-1133">Transmembrane helix</keyword>
<name>MCR1B_VANPO</name>
<dbReference type="EC" id="1.6.2.2"/>
<dbReference type="EMBL" id="DS480420">
    <property type="protein sequence ID" value="EDO16639.1"/>
    <property type="molecule type" value="Genomic_DNA"/>
</dbReference>
<dbReference type="RefSeq" id="XP_001644497.1">
    <property type="nucleotide sequence ID" value="XM_001644447.1"/>
</dbReference>
<dbReference type="SMR" id="A7TM72"/>
<dbReference type="STRING" id="436907.A7TM72"/>
<dbReference type="GeneID" id="5544798"/>
<dbReference type="KEGG" id="vpo:Kpol_529p19"/>
<dbReference type="eggNOG" id="KOG0534">
    <property type="taxonomic scope" value="Eukaryota"/>
</dbReference>
<dbReference type="HOGENOM" id="CLU_003827_9_1_1"/>
<dbReference type="InParanoid" id="A7TM72"/>
<dbReference type="OMA" id="WLPVIRP"/>
<dbReference type="OrthoDB" id="432685at2759"/>
<dbReference type="PhylomeDB" id="A7TM72"/>
<dbReference type="Proteomes" id="UP000000267">
    <property type="component" value="Unassembled WGS sequence"/>
</dbReference>
<dbReference type="GO" id="GO:0005741">
    <property type="term" value="C:mitochondrial outer membrane"/>
    <property type="evidence" value="ECO:0007669"/>
    <property type="project" value="UniProtKB-SubCell"/>
</dbReference>
<dbReference type="GO" id="GO:0004128">
    <property type="term" value="F:cytochrome-b5 reductase activity, acting on NAD(P)H"/>
    <property type="evidence" value="ECO:0007669"/>
    <property type="project" value="UniProtKB-EC"/>
</dbReference>
<dbReference type="GO" id="GO:0006696">
    <property type="term" value="P:ergosterol biosynthetic process"/>
    <property type="evidence" value="ECO:0007669"/>
    <property type="project" value="TreeGrafter"/>
</dbReference>
<dbReference type="CDD" id="cd06183">
    <property type="entry name" value="cyt_b5_reduct_like"/>
    <property type="match status" value="1"/>
</dbReference>
<dbReference type="FunFam" id="3.40.50.80:FF:000009">
    <property type="entry name" value="NADH-cytochrome b5 reductase"/>
    <property type="match status" value="1"/>
</dbReference>
<dbReference type="Gene3D" id="3.40.50.80">
    <property type="entry name" value="Nucleotide-binding domain of ferredoxin-NADP reductase (FNR) module"/>
    <property type="match status" value="1"/>
</dbReference>
<dbReference type="Gene3D" id="2.40.30.10">
    <property type="entry name" value="Translation factors"/>
    <property type="match status" value="1"/>
</dbReference>
<dbReference type="InterPro" id="IPR001834">
    <property type="entry name" value="CBR-like"/>
</dbReference>
<dbReference type="InterPro" id="IPR008333">
    <property type="entry name" value="Cbr1-like_FAD-bd_dom"/>
</dbReference>
<dbReference type="InterPro" id="IPR017927">
    <property type="entry name" value="FAD-bd_FR_type"/>
</dbReference>
<dbReference type="InterPro" id="IPR001709">
    <property type="entry name" value="Flavoprot_Pyr_Nucl_cyt_Rdtase"/>
</dbReference>
<dbReference type="InterPro" id="IPR039261">
    <property type="entry name" value="FNR_nucleotide-bd"/>
</dbReference>
<dbReference type="InterPro" id="IPR001433">
    <property type="entry name" value="OxRdtase_FAD/NAD-bd"/>
</dbReference>
<dbReference type="InterPro" id="IPR017938">
    <property type="entry name" value="Riboflavin_synthase-like_b-brl"/>
</dbReference>
<dbReference type="PANTHER" id="PTHR19370">
    <property type="entry name" value="NADH-CYTOCHROME B5 REDUCTASE"/>
    <property type="match status" value="1"/>
</dbReference>
<dbReference type="PANTHER" id="PTHR19370:SF171">
    <property type="entry name" value="NADH-CYTOCHROME B5 REDUCTASE 2"/>
    <property type="match status" value="1"/>
</dbReference>
<dbReference type="Pfam" id="PF00970">
    <property type="entry name" value="FAD_binding_6"/>
    <property type="match status" value="1"/>
</dbReference>
<dbReference type="Pfam" id="PF00175">
    <property type="entry name" value="NAD_binding_1"/>
    <property type="match status" value="1"/>
</dbReference>
<dbReference type="PRINTS" id="PR00406">
    <property type="entry name" value="CYTB5RDTASE"/>
</dbReference>
<dbReference type="PRINTS" id="PR00371">
    <property type="entry name" value="FPNCR"/>
</dbReference>
<dbReference type="SUPFAM" id="SSF52343">
    <property type="entry name" value="Ferredoxin reductase-like, C-terminal NADP-linked domain"/>
    <property type="match status" value="1"/>
</dbReference>
<dbReference type="SUPFAM" id="SSF63380">
    <property type="entry name" value="Riboflavin synthase domain-like"/>
    <property type="match status" value="1"/>
</dbReference>
<dbReference type="PROSITE" id="PS51384">
    <property type="entry name" value="FAD_FR"/>
    <property type="match status" value="1"/>
</dbReference>
<organism>
    <name type="scientific">Vanderwaltozyma polyspora (strain ATCC 22028 / DSM 70294 / BCRC 21397 / CBS 2163 / NBRC 10782 / NRRL Y-8283 / UCD 57-17)</name>
    <name type="common">Kluyveromyces polysporus</name>
    <dbReference type="NCBI Taxonomy" id="436907"/>
    <lineage>
        <taxon>Eukaryota</taxon>
        <taxon>Fungi</taxon>
        <taxon>Dikarya</taxon>
        <taxon>Ascomycota</taxon>
        <taxon>Saccharomycotina</taxon>
        <taxon>Saccharomycetes</taxon>
        <taxon>Saccharomycetales</taxon>
        <taxon>Saccharomycetaceae</taxon>
        <taxon>Vanderwaltozyma</taxon>
    </lineage>
</organism>
<comment type="function">
    <text evidence="1">May mediate the reduction of outer membrane cytochrome b5.</text>
</comment>
<comment type="catalytic activity">
    <reaction>
        <text>2 Fe(III)-[cytochrome b5] + NADH = 2 Fe(II)-[cytochrome b5] + NAD(+) + H(+)</text>
        <dbReference type="Rhea" id="RHEA:46680"/>
        <dbReference type="Rhea" id="RHEA-COMP:10438"/>
        <dbReference type="Rhea" id="RHEA-COMP:10439"/>
        <dbReference type="ChEBI" id="CHEBI:15378"/>
        <dbReference type="ChEBI" id="CHEBI:29033"/>
        <dbReference type="ChEBI" id="CHEBI:29034"/>
        <dbReference type="ChEBI" id="CHEBI:57540"/>
        <dbReference type="ChEBI" id="CHEBI:57945"/>
        <dbReference type="EC" id="1.6.2.2"/>
    </reaction>
</comment>
<comment type="cofactor">
    <cofactor evidence="1">
        <name>FAD</name>
        <dbReference type="ChEBI" id="CHEBI:57692"/>
    </cofactor>
</comment>
<comment type="subcellular location">
    <subcellularLocation>
        <location evidence="1">Mitochondrion outer membrane</location>
        <topology evidence="1">Single-pass membrane protein</topology>
    </subcellularLocation>
</comment>
<comment type="similarity">
    <text evidence="4">Belongs to the flavoprotein pyridine nucleotide cytochrome reductase family.</text>
</comment>